<gene>
    <name evidence="1" type="primary">fhs</name>
    <name type="ordered locus">RHOS4_22690</name>
    <name type="ORF">RSP_0663</name>
</gene>
<comment type="catalytic activity">
    <reaction evidence="1">
        <text>(6S)-5,6,7,8-tetrahydrofolate + formate + ATP = (6R)-10-formyltetrahydrofolate + ADP + phosphate</text>
        <dbReference type="Rhea" id="RHEA:20221"/>
        <dbReference type="ChEBI" id="CHEBI:15740"/>
        <dbReference type="ChEBI" id="CHEBI:30616"/>
        <dbReference type="ChEBI" id="CHEBI:43474"/>
        <dbReference type="ChEBI" id="CHEBI:57453"/>
        <dbReference type="ChEBI" id="CHEBI:195366"/>
        <dbReference type="ChEBI" id="CHEBI:456216"/>
        <dbReference type="EC" id="6.3.4.3"/>
    </reaction>
</comment>
<comment type="pathway">
    <text evidence="1">One-carbon metabolism; tetrahydrofolate interconversion.</text>
</comment>
<comment type="similarity">
    <text evidence="1">Belongs to the formate--tetrahydrofolate ligase family.</text>
</comment>
<protein>
    <recommendedName>
        <fullName evidence="1">Formate--tetrahydrofolate ligase</fullName>
        <ecNumber evidence="1">6.3.4.3</ecNumber>
    </recommendedName>
    <alternativeName>
        <fullName evidence="1">Formyltetrahydrofolate synthetase</fullName>
        <shortName evidence="1">FHS</shortName>
        <shortName evidence="1">FTHFS</shortName>
    </alternativeName>
</protein>
<organism>
    <name type="scientific">Cereibacter sphaeroides (strain ATCC 17023 / DSM 158 / JCM 6121 / CCUG 31486 / LMG 2827 / NBRC 12203 / NCIMB 8253 / ATH 2.4.1.)</name>
    <name type="common">Rhodobacter sphaeroides</name>
    <dbReference type="NCBI Taxonomy" id="272943"/>
    <lineage>
        <taxon>Bacteria</taxon>
        <taxon>Pseudomonadati</taxon>
        <taxon>Pseudomonadota</taxon>
        <taxon>Alphaproteobacteria</taxon>
        <taxon>Rhodobacterales</taxon>
        <taxon>Paracoccaceae</taxon>
        <taxon>Cereibacter</taxon>
    </lineage>
</organism>
<evidence type="ECO:0000255" key="1">
    <source>
        <dbReference type="HAMAP-Rule" id="MF_01543"/>
    </source>
</evidence>
<feature type="chain" id="PRO_0000300534" description="Formate--tetrahydrofolate ligase">
    <location>
        <begin position="1"/>
        <end position="557"/>
    </location>
</feature>
<feature type="binding site" evidence="1">
    <location>
        <begin position="67"/>
        <end position="74"/>
    </location>
    <ligand>
        <name>ATP</name>
        <dbReference type="ChEBI" id="CHEBI:30616"/>
    </ligand>
</feature>
<accession>Q3J047</accession>
<keyword id="KW-0067">ATP-binding</keyword>
<keyword id="KW-0436">Ligase</keyword>
<keyword id="KW-0547">Nucleotide-binding</keyword>
<keyword id="KW-0554">One-carbon metabolism</keyword>
<keyword id="KW-1185">Reference proteome</keyword>
<name>FTHS_CERS4</name>
<reference key="1">
    <citation type="submission" date="2005-09" db="EMBL/GenBank/DDBJ databases">
        <title>Complete sequence of chromosome 1 of Rhodobacter sphaeroides 2.4.1.</title>
        <authorList>
            <person name="Copeland A."/>
            <person name="Lucas S."/>
            <person name="Lapidus A."/>
            <person name="Barry K."/>
            <person name="Detter J.C."/>
            <person name="Glavina T."/>
            <person name="Hammon N."/>
            <person name="Israni S."/>
            <person name="Pitluck S."/>
            <person name="Richardson P."/>
            <person name="Mackenzie C."/>
            <person name="Choudhary M."/>
            <person name="Larimer F."/>
            <person name="Hauser L.J."/>
            <person name="Land M."/>
            <person name="Donohue T.J."/>
            <person name="Kaplan S."/>
        </authorList>
    </citation>
    <scope>NUCLEOTIDE SEQUENCE [LARGE SCALE GENOMIC DNA]</scope>
    <source>
        <strain>ATCC 17023 / DSM 158 / JCM 6121 / CCUG 31486 / LMG 2827 / NBRC 12203 / NCIMB 8253 / ATH 2.4.1.</strain>
    </source>
</reference>
<dbReference type="EC" id="6.3.4.3" evidence="1"/>
<dbReference type="EMBL" id="CP000143">
    <property type="protein sequence ID" value="ABA79837.1"/>
    <property type="molecule type" value="Genomic_DNA"/>
</dbReference>
<dbReference type="RefSeq" id="WP_002720843.1">
    <property type="nucleotide sequence ID" value="NZ_CP030271.1"/>
</dbReference>
<dbReference type="RefSeq" id="YP_353738.1">
    <property type="nucleotide sequence ID" value="NC_007493.2"/>
</dbReference>
<dbReference type="SMR" id="Q3J047"/>
<dbReference type="STRING" id="272943.RSP_0663"/>
<dbReference type="EnsemblBacteria" id="ABA79837">
    <property type="protein sequence ID" value="ABA79837"/>
    <property type="gene ID" value="RSP_0663"/>
</dbReference>
<dbReference type="GeneID" id="3718273"/>
<dbReference type="KEGG" id="rsp:RSP_0663"/>
<dbReference type="PATRIC" id="fig|272943.9.peg.2613"/>
<dbReference type="eggNOG" id="COG2759">
    <property type="taxonomic scope" value="Bacteria"/>
</dbReference>
<dbReference type="OrthoDB" id="9761733at2"/>
<dbReference type="PhylomeDB" id="Q3J047"/>
<dbReference type="UniPathway" id="UPA00193"/>
<dbReference type="Proteomes" id="UP000002703">
    <property type="component" value="Chromosome 1"/>
</dbReference>
<dbReference type="GO" id="GO:0005524">
    <property type="term" value="F:ATP binding"/>
    <property type="evidence" value="ECO:0007669"/>
    <property type="project" value="UniProtKB-UniRule"/>
</dbReference>
<dbReference type="GO" id="GO:0004329">
    <property type="term" value="F:formate-tetrahydrofolate ligase activity"/>
    <property type="evidence" value="ECO:0007669"/>
    <property type="project" value="UniProtKB-UniRule"/>
</dbReference>
<dbReference type="GO" id="GO:0035999">
    <property type="term" value="P:tetrahydrofolate interconversion"/>
    <property type="evidence" value="ECO:0007669"/>
    <property type="project" value="UniProtKB-UniRule"/>
</dbReference>
<dbReference type="CDD" id="cd00477">
    <property type="entry name" value="FTHFS"/>
    <property type="match status" value="1"/>
</dbReference>
<dbReference type="FunFam" id="3.30.1510.10:FF:000001">
    <property type="entry name" value="Formate--tetrahydrofolate ligase"/>
    <property type="match status" value="1"/>
</dbReference>
<dbReference type="Gene3D" id="3.30.1510.10">
    <property type="entry name" value="Domain 2, N(10)-formyltetrahydrofolate synthetase"/>
    <property type="match status" value="1"/>
</dbReference>
<dbReference type="Gene3D" id="3.10.410.10">
    <property type="entry name" value="Formyltetrahydrofolate synthetase, domain 3"/>
    <property type="match status" value="1"/>
</dbReference>
<dbReference type="Gene3D" id="3.40.50.300">
    <property type="entry name" value="P-loop containing nucleotide triphosphate hydrolases"/>
    <property type="match status" value="1"/>
</dbReference>
<dbReference type="HAMAP" id="MF_01543">
    <property type="entry name" value="FTHFS"/>
    <property type="match status" value="1"/>
</dbReference>
<dbReference type="InterPro" id="IPR000559">
    <property type="entry name" value="Formate_THF_ligase"/>
</dbReference>
<dbReference type="InterPro" id="IPR020628">
    <property type="entry name" value="Formate_THF_ligase_CS"/>
</dbReference>
<dbReference type="InterPro" id="IPR027417">
    <property type="entry name" value="P-loop_NTPase"/>
</dbReference>
<dbReference type="NCBIfam" id="NF010030">
    <property type="entry name" value="PRK13505.1"/>
    <property type="match status" value="1"/>
</dbReference>
<dbReference type="Pfam" id="PF01268">
    <property type="entry name" value="FTHFS"/>
    <property type="match status" value="1"/>
</dbReference>
<dbReference type="SUPFAM" id="SSF52540">
    <property type="entry name" value="P-loop containing nucleoside triphosphate hydrolases"/>
    <property type="match status" value="1"/>
</dbReference>
<dbReference type="PROSITE" id="PS00721">
    <property type="entry name" value="FTHFS_1"/>
    <property type="match status" value="1"/>
</dbReference>
<dbReference type="PROSITE" id="PS00722">
    <property type="entry name" value="FTHFS_2"/>
    <property type="match status" value="1"/>
</dbReference>
<sequence>MAVQTDIEIARAARKKPIQEIGAGLGIPAEALIPYGHDKAKVGQGFIRGLEGRPDGKLILVTAINPTPAGEGKTTTTVGLGDGLNRIGKKAVICIREASLGPNFGMKGGAAGGGRAQVVPMEDMNLHFTGDFHAITAAHNLLAAMIDNHIYWGNALELDARRITWRRVMDMNDRALRDTVVNLGGVANGFPRQTGFDITVASEVMAILCLADDLEDLERRLGRIVVGYRRDKSPVYCRDLKAAGAMAVLLKDAMQPNLVQTIENNPAFVHGGPFANIAHGCNSVIATRTALKLADYVVTEAGFGADLGAEKFFDIKCRLAGLKPSAAVVVATVRALKMNGGVAREDLGREDVAALRRGCANLGRHIANVKGFGVPVVVAINHFTTDTEAEIEAVRAYAAGQGAEAFLCRHWAEGSAGIEDLAQKVVELAETPSMFAPLYPDDMPLFEKMETVARRIYHAHDVIADHVIRDQLRTWEEAGYGALPVCMAKTQYSFTTDAAIRGAPEGHSIPIREVRLAAGAGFVVAICGEIRTMPGLPSQPAAELIHLDEEGRIEGLF</sequence>
<proteinExistence type="inferred from homology"/>